<comment type="function">
    <text evidence="1">Functions in both vacuole inheritance and protein targeting from the cytoplasm to vacuole.</text>
</comment>
<comment type="subcellular location">
    <subcellularLocation>
        <location evidence="1">Vacuole membrane</location>
        <topology evidence="1">Lipid-anchor</topology>
    </subcellularLocation>
</comment>
<comment type="similarity">
    <text evidence="3">Belongs to the beta-catenin family.</text>
</comment>
<sequence length="560" mass="60841">MGICSSSCCGGKSRDALYENVLAENEREAVADLLQYLENRAETDFFSGEPLRALSTLVYSDNIDLQRSASLTFAEITERDVRAVDRDTLGPILFLLENSDIEVQRAASAALGNLAVNTDNKVLIVQLGGLQPLIKQMMSPNVEVQCNAVGCITNLATHEENKAKIARSGALGPLTRLAKSKDMRVQRNATGALLNMTHSDENRQQLVNAGAIPVLVQLLSSSDVDVQYYCTTALSNIAVDANNRRKLAETEQRLVQYLVNLTESSSPKVQCQAALALRNLASDEKYQLEIVQAHGLGPLLRLLRSSYLPLILSAVACIRNISIHPQNESPIIEAGFLKPLVDLLGSTDNEEIQCHAISTLRNLAASSDRNKSLVLEAGAVQKCKQLVLEVPVTVQSEMTAAIAVLALSDELKTHLLELGVFDVLIPLTMSPSVEVQGNSAAALGNLSSKVGDYSIFVQNWMEPRDGIHGYLNRFLASGDATFQHIAIWTLLQLLESEDKKLIGLIGKSDGVVDMIKQIANRQMMESDNEAEDDDEGEVVNLAQRCLELLGQGGSKSHIEG</sequence>
<organism>
    <name type="scientific">Chaetomium globosum (strain ATCC 6205 / CBS 148.51 / DSM 1962 / NBRC 6347 / NRRL 1970)</name>
    <name type="common">Soil fungus</name>
    <dbReference type="NCBI Taxonomy" id="306901"/>
    <lineage>
        <taxon>Eukaryota</taxon>
        <taxon>Fungi</taxon>
        <taxon>Dikarya</taxon>
        <taxon>Ascomycota</taxon>
        <taxon>Pezizomycotina</taxon>
        <taxon>Sordariomycetes</taxon>
        <taxon>Sordariomycetidae</taxon>
        <taxon>Sordariales</taxon>
        <taxon>Chaetomiaceae</taxon>
        <taxon>Chaetomium</taxon>
    </lineage>
</organism>
<reference key="1">
    <citation type="journal article" date="2015" name="Genome Announc.">
        <title>Draft genome sequence of the cellulolytic fungus Chaetomium globosum.</title>
        <authorList>
            <person name="Cuomo C.A."/>
            <person name="Untereiner W.A."/>
            <person name="Ma L.-J."/>
            <person name="Grabherr M."/>
            <person name="Birren B.W."/>
        </authorList>
    </citation>
    <scope>NUCLEOTIDE SEQUENCE [LARGE SCALE GENOMIC DNA]</scope>
    <source>
        <strain>ATCC 6205 / CBS 148.51 / DSM 1962 / NBRC 6347 / NRRL 1970</strain>
    </source>
</reference>
<protein>
    <recommendedName>
        <fullName>Vacuolar protein 8</fullName>
    </recommendedName>
</protein>
<keyword id="KW-0449">Lipoprotein</keyword>
<keyword id="KW-0472">Membrane</keyword>
<keyword id="KW-0519">Myristate</keyword>
<keyword id="KW-0564">Palmitate</keyword>
<keyword id="KW-1185">Reference proteome</keyword>
<keyword id="KW-0677">Repeat</keyword>
<keyword id="KW-0926">Vacuole</keyword>
<name>VAC8_CHAGB</name>
<accession>Q2GW27</accession>
<evidence type="ECO:0000250" key="1"/>
<evidence type="ECO:0000255" key="2"/>
<evidence type="ECO:0000305" key="3"/>
<dbReference type="EMBL" id="CH408033">
    <property type="protein sequence ID" value="EAQ86574.1"/>
    <property type="molecule type" value="Genomic_DNA"/>
</dbReference>
<dbReference type="RefSeq" id="XP_001225483.1">
    <property type="nucleotide sequence ID" value="XM_001225482.1"/>
</dbReference>
<dbReference type="SMR" id="Q2GW27"/>
<dbReference type="FunCoup" id="Q2GW27">
    <property type="interactions" value="102"/>
</dbReference>
<dbReference type="STRING" id="306901.Q2GW27"/>
<dbReference type="GeneID" id="4393666"/>
<dbReference type="VEuPathDB" id="FungiDB:CHGG_07827"/>
<dbReference type="eggNOG" id="KOG4224">
    <property type="taxonomic scope" value="Eukaryota"/>
</dbReference>
<dbReference type="HOGENOM" id="CLU_021483_0_0_1"/>
<dbReference type="InParanoid" id="Q2GW27"/>
<dbReference type="OMA" id="VWDKPDG"/>
<dbReference type="OrthoDB" id="7537227at2759"/>
<dbReference type="Proteomes" id="UP000001056">
    <property type="component" value="Unassembled WGS sequence"/>
</dbReference>
<dbReference type="GO" id="GO:0000329">
    <property type="term" value="C:fungal-type vacuole membrane"/>
    <property type="evidence" value="ECO:0007669"/>
    <property type="project" value="EnsemblFungi"/>
</dbReference>
<dbReference type="GO" id="GO:0045121">
    <property type="term" value="C:membrane raft"/>
    <property type="evidence" value="ECO:0007669"/>
    <property type="project" value="EnsemblFungi"/>
</dbReference>
<dbReference type="GO" id="GO:0071563">
    <property type="term" value="C:Myo2p-Vac17p-Vac8p transport complex"/>
    <property type="evidence" value="ECO:0007669"/>
    <property type="project" value="EnsemblFungi"/>
</dbReference>
<dbReference type="GO" id="GO:0031965">
    <property type="term" value="C:nuclear membrane"/>
    <property type="evidence" value="ECO:0007669"/>
    <property type="project" value="EnsemblFungi"/>
</dbReference>
<dbReference type="GO" id="GO:0071561">
    <property type="term" value="C:nucleus-vacuole junction"/>
    <property type="evidence" value="ECO:0007669"/>
    <property type="project" value="EnsemblFungi"/>
</dbReference>
<dbReference type="GO" id="GO:0000407">
    <property type="term" value="C:phagophore assembly site"/>
    <property type="evidence" value="ECO:0007669"/>
    <property type="project" value="EnsemblFungi"/>
</dbReference>
<dbReference type="GO" id="GO:0042802">
    <property type="term" value="F:identical protein binding"/>
    <property type="evidence" value="ECO:0007669"/>
    <property type="project" value="EnsemblFungi"/>
</dbReference>
<dbReference type="GO" id="GO:0043495">
    <property type="term" value="F:protein-membrane adaptor activity"/>
    <property type="evidence" value="ECO:0007669"/>
    <property type="project" value="EnsemblFungi"/>
</dbReference>
<dbReference type="GO" id="GO:0051656">
    <property type="term" value="P:establishment of organelle localization"/>
    <property type="evidence" value="ECO:0007669"/>
    <property type="project" value="EnsemblFungi"/>
</dbReference>
<dbReference type="GO" id="GO:0071562">
    <property type="term" value="P:nucleus-vacuole junction assembly"/>
    <property type="evidence" value="ECO:0007669"/>
    <property type="project" value="EnsemblFungi"/>
</dbReference>
<dbReference type="GO" id="GO:0000425">
    <property type="term" value="P:pexophagy"/>
    <property type="evidence" value="ECO:0007669"/>
    <property type="project" value="EnsemblFungi"/>
</dbReference>
<dbReference type="GO" id="GO:0034727">
    <property type="term" value="P:piecemeal microautophagy of the nucleus"/>
    <property type="evidence" value="ECO:0007669"/>
    <property type="project" value="EnsemblFungi"/>
</dbReference>
<dbReference type="GO" id="GO:1903044">
    <property type="term" value="P:protein localization to membrane raft"/>
    <property type="evidence" value="ECO:0007669"/>
    <property type="project" value="EnsemblFungi"/>
</dbReference>
<dbReference type="GO" id="GO:0034497">
    <property type="term" value="P:protein localization to phagophore assembly site"/>
    <property type="evidence" value="ECO:0007669"/>
    <property type="project" value="EnsemblFungi"/>
</dbReference>
<dbReference type="GO" id="GO:0031503">
    <property type="term" value="P:protein-containing complex localization"/>
    <property type="evidence" value="ECO:0007669"/>
    <property type="project" value="EnsemblFungi"/>
</dbReference>
<dbReference type="GO" id="GO:0034517">
    <property type="term" value="P:ribophagy"/>
    <property type="evidence" value="ECO:0007669"/>
    <property type="project" value="EnsemblFungi"/>
</dbReference>
<dbReference type="GO" id="GO:0042144">
    <property type="term" value="P:vacuole fusion, non-autophagic"/>
    <property type="evidence" value="ECO:0007669"/>
    <property type="project" value="EnsemblFungi"/>
</dbReference>
<dbReference type="GO" id="GO:0000011">
    <property type="term" value="P:vacuole inheritance"/>
    <property type="evidence" value="ECO:0007669"/>
    <property type="project" value="EnsemblFungi"/>
</dbReference>
<dbReference type="FunFam" id="1.25.10.10:FF:000243">
    <property type="entry name" value="Putative Vacuolar protein 8"/>
    <property type="match status" value="1"/>
</dbReference>
<dbReference type="FunFam" id="1.25.10.10:FF:000095">
    <property type="entry name" value="Vacuolar protein 8"/>
    <property type="match status" value="1"/>
</dbReference>
<dbReference type="Gene3D" id="1.25.10.10">
    <property type="entry name" value="Leucine-rich Repeat Variant"/>
    <property type="match status" value="3"/>
</dbReference>
<dbReference type="InterPro" id="IPR011989">
    <property type="entry name" value="ARM-like"/>
</dbReference>
<dbReference type="InterPro" id="IPR016024">
    <property type="entry name" value="ARM-type_fold"/>
</dbReference>
<dbReference type="InterPro" id="IPR000225">
    <property type="entry name" value="Armadillo"/>
</dbReference>
<dbReference type="InterPro" id="IPR045156">
    <property type="entry name" value="Vac8"/>
</dbReference>
<dbReference type="PANTHER" id="PTHR47249">
    <property type="entry name" value="VACUOLAR PROTEIN 8"/>
    <property type="match status" value="1"/>
</dbReference>
<dbReference type="PANTHER" id="PTHR47249:SF1">
    <property type="entry name" value="VACUOLAR PROTEIN 8"/>
    <property type="match status" value="1"/>
</dbReference>
<dbReference type="Pfam" id="PF00514">
    <property type="entry name" value="Arm"/>
    <property type="match status" value="6"/>
</dbReference>
<dbReference type="SMART" id="SM00185">
    <property type="entry name" value="ARM"/>
    <property type="match status" value="9"/>
</dbReference>
<dbReference type="SUPFAM" id="SSF48371">
    <property type="entry name" value="ARM repeat"/>
    <property type="match status" value="1"/>
</dbReference>
<dbReference type="PROSITE" id="PS50176">
    <property type="entry name" value="ARM_REPEAT"/>
    <property type="match status" value="7"/>
</dbReference>
<feature type="initiator methionine" description="Removed" evidence="1">
    <location>
        <position position="1"/>
    </location>
</feature>
<feature type="chain" id="PRO_0000256210" description="Vacuolar protein 8">
    <location>
        <begin position="2"/>
        <end position="560"/>
    </location>
</feature>
<feature type="repeat" description="ARM 1">
    <location>
        <begin position="39"/>
        <end position="76"/>
    </location>
</feature>
<feature type="repeat" description="ARM 2">
    <location>
        <begin position="77"/>
        <end position="116"/>
    </location>
</feature>
<feature type="repeat" description="ARM 3">
    <location>
        <begin position="118"/>
        <end position="157"/>
    </location>
</feature>
<feature type="repeat" description="ARM 4">
    <location>
        <begin position="159"/>
        <end position="198"/>
    </location>
</feature>
<feature type="repeat" description="ARM 5">
    <location>
        <begin position="200"/>
        <end position="239"/>
    </location>
</feature>
<feature type="repeat" description="ARM 6">
    <location>
        <begin position="243"/>
        <end position="282"/>
    </location>
</feature>
<feature type="repeat" description="ARM 7">
    <location>
        <begin position="284"/>
        <end position="323"/>
    </location>
</feature>
<feature type="repeat" description="ARM 8">
    <location>
        <begin position="325"/>
        <end position="365"/>
    </location>
</feature>
<feature type="repeat" description="ARM 9">
    <location>
        <begin position="409"/>
        <end position="448"/>
    </location>
</feature>
<feature type="lipid moiety-binding region" description="N-myristoyl glycine" evidence="1">
    <location>
        <position position="2"/>
    </location>
</feature>
<feature type="lipid moiety-binding region" description="S-palmitoyl cysteine" evidence="2">
    <location>
        <position position="4"/>
    </location>
</feature>
<gene>
    <name type="primary">VAC8</name>
    <name type="ORF">CHGG_07827</name>
</gene>
<proteinExistence type="inferred from homology"/>